<accession>A1CZP6</accession>
<keyword id="KW-0240">DNA-directed RNA polymerase</keyword>
<keyword id="KW-0539">Nucleus</keyword>
<keyword id="KW-1185">Reference proteome</keyword>
<keyword id="KW-0804">Transcription</keyword>
<keyword id="KW-0862">Zinc</keyword>
<sequence length="655" mass="74697">MRQATELDQSIHCASAANLDLVQFAAELCELLVEENFGELFGRIFATLSRYDRLNLPRLKAYSELPNRQLLPALAAMIQQHLVYHYTSYDDGVTYYEANMQSAYYLVRSGKILEFVEERLGKYAATVLSTIMNLGHAQVSYLETLPELTSEAVKANGVSEEHGEHEEGEEQSNGLNGEHSNEQPELLHPTLKALAAHGYIIRVREAQFQSHADNILDAERVIRSKPEMKALKGKRLEEAVIEGTLGLLKERTDGDLTRGLIVHGVPRGAKRKYSSRRADEPNKKPRTDFASVDEIDEQDEEEENEWLDDEMGYDTTPMESGLVVRVNYNKLDVALRNRRFIELAEQGVSPETAEVYECLLRRIEYQTHQCRDTAEIPREGEEGEQYSVPIALSALAEDVDPRLDLSSSTGPMDTSQPDGRRGKRPLESDVDGTNHEGANGLSSGGNRTFEIDQHLSLLAQPPHNLTSKRMVSGLITWTVEFRHLARKLRHLELERMIEARYGDVALRVVRVLHAKGKLDEKRLQEISLLPFKDLRQVLASMQAGGFVDLQEVPRDAQRQPSRTIYLWYYDPDRICNSVLQDTYKAMSRCLQRLRFERSRIKDFLEKTERSDVKGNEQRFLSEPELVLLEQWRAKEALLLGEVARLDEMVAVMRDY</sequence>
<proteinExistence type="inferred from homology"/>
<reference key="1">
    <citation type="journal article" date="2008" name="PLoS Genet.">
        <title>Genomic islands in the pathogenic filamentous fungus Aspergillus fumigatus.</title>
        <authorList>
            <person name="Fedorova N.D."/>
            <person name="Khaldi N."/>
            <person name="Joardar V.S."/>
            <person name="Maiti R."/>
            <person name="Amedeo P."/>
            <person name="Anderson M.J."/>
            <person name="Crabtree J."/>
            <person name="Silva J.C."/>
            <person name="Badger J.H."/>
            <person name="Albarraq A."/>
            <person name="Angiuoli S."/>
            <person name="Bussey H."/>
            <person name="Bowyer P."/>
            <person name="Cotty P.J."/>
            <person name="Dyer P.S."/>
            <person name="Egan A."/>
            <person name="Galens K."/>
            <person name="Fraser-Liggett C.M."/>
            <person name="Haas B.J."/>
            <person name="Inman J.M."/>
            <person name="Kent R."/>
            <person name="Lemieux S."/>
            <person name="Malavazi I."/>
            <person name="Orvis J."/>
            <person name="Roemer T."/>
            <person name="Ronning C.M."/>
            <person name="Sundaram J.P."/>
            <person name="Sutton G."/>
            <person name="Turner G."/>
            <person name="Venter J.C."/>
            <person name="White O.R."/>
            <person name="Whitty B.R."/>
            <person name="Youngman P."/>
            <person name="Wolfe K.H."/>
            <person name="Goldman G.H."/>
            <person name="Wortman J.R."/>
            <person name="Jiang B."/>
            <person name="Denning D.W."/>
            <person name="Nierman W.C."/>
        </authorList>
    </citation>
    <scope>NUCLEOTIDE SEQUENCE [LARGE SCALE GENOMIC DNA]</scope>
    <source>
        <strain>ATCC 1020 / DSM 3700 / CBS 544.65 / FGSC A1164 / JCM 1740 / NRRL 181 / WB 181</strain>
    </source>
</reference>
<protein>
    <recommendedName>
        <fullName>DNA-directed RNA polymerase III subunit rpc3</fullName>
        <shortName>RNA polymerase III subunit C3</shortName>
    </recommendedName>
</protein>
<organism>
    <name type="scientific">Neosartorya fischeri (strain ATCC 1020 / DSM 3700 / CBS 544.65 / FGSC A1164 / JCM 1740 / NRRL 181 / WB 181)</name>
    <name type="common">Aspergillus fischerianus</name>
    <dbReference type="NCBI Taxonomy" id="331117"/>
    <lineage>
        <taxon>Eukaryota</taxon>
        <taxon>Fungi</taxon>
        <taxon>Dikarya</taxon>
        <taxon>Ascomycota</taxon>
        <taxon>Pezizomycotina</taxon>
        <taxon>Eurotiomycetes</taxon>
        <taxon>Eurotiomycetidae</taxon>
        <taxon>Eurotiales</taxon>
        <taxon>Aspergillaceae</taxon>
        <taxon>Aspergillus</taxon>
        <taxon>Aspergillus subgen. Fumigati</taxon>
    </lineage>
</organism>
<gene>
    <name type="primary">rpc82</name>
    <name type="synonym">rpc3</name>
    <name type="ORF">NFIA_037900</name>
</gene>
<evidence type="ECO:0000250" key="1"/>
<evidence type="ECO:0000256" key="2">
    <source>
        <dbReference type="SAM" id="MobiDB-lite"/>
    </source>
</evidence>
<evidence type="ECO:0000305" key="3"/>
<feature type="chain" id="PRO_0000351037" description="DNA-directed RNA polymerase III subunit rpc3">
    <location>
        <begin position="1"/>
        <end position="655"/>
    </location>
</feature>
<feature type="region of interest" description="Disordered" evidence="2">
    <location>
        <begin position="153"/>
        <end position="183"/>
    </location>
</feature>
<feature type="region of interest" description="Disordered" evidence="2">
    <location>
        <begin position="270"/>
        <end position="305"/>
    </location>
</feature>
<feature type="region of interest" description="Disordered" evidence="2">
    <location>
        <begin position="402"/>
        <end position="445"/>
    </location>
</feature>
<feature type="region of interest" description="Leucine-zipper">
    <location>
        <begin position="582"/>
        <end position="603"/>
    </location>
</feature>
<feature type="compositionally biased region" description="Basic and acidic residues" evidence="2">
    <location>
        <begin position="276"/>
        <end position="287"/>
    </location>
</feature>
<feature type="compositionally biased region" description="Acidic residues" evidence="2">
    <location>
        <begin position="291"/>
        <end position="305"/>
    </location>
</feature>
<feature type="compositionally biased region" description="Polar residues" evidence="2">
    <location>
        <begin position="405"/>
        <end position="417"/>
    </location>
</feature>
<feature type="compositionally biased region" description="Basic and acidic residues" evidence="2">
    <location>
        <begin position="418"/>
        <end position="427"/>
    </location>
</feature>
<name>RPC3_NEOFI</name>
<dbReference type="EMBL" id="DS027686">
    <property type="protein sequence ID" value="EAW24216.1"/>
    <property type="molecule type" value="Genomic_DNA"/>
</dbReference>
<dbReference type="RefSeq" id="XP_001266113.1">
    <property type="nucleotide sequence ID" value="XM_001266112.1"/>
</dbReference>
<dbReference type="SMR" id="A1CZP6"/>
<dbReference type="STRING" id="331117.A1CZP6"/>
<dbReference type="EnsemblFungi" id="EAW24216">
    <property type="protein sequence ID" value="EAW24216"/>
    <property type="gene ID" value="NFIA_037900"/>
</dbReference>
<dbReference type="GeneID" id="4592324"/>
<dbReference type="KEGG" id="nfi:NFIA_037900"/>
<dbReference type="VEuPathDB" id="FungiDB:NFIA_037900"/>
<dbReference type="eggNOG" id="KOG2587">
    <property type="taxonomic scope" value="Eukaryota"/>
</dbReference>
<dbReference type="HOGENOM" id="CLU_023294_0_0_1"/>
<dbReference type="OMA" id="KHRFVRH"/>
<dbReference type="OrthoDB" id="272392at2759"/>
<dbReference type="Proteomes" id="UP000006702">
    <property type="component" value="Unassembled WGS sequence"/>
</dbReference>
<dbReference type="GO" id="GO:0005666">
    <property type="term" value="C:RNA polymerase III complex"/>
    <property type="evidence" value="ECO:0007669"/>
    <property type="project" value="InterPro"/>
</dbReference>
<dbReference type="GO" id="GO:0003697">
    <property type="term" value="F:single-stranded DNA binding"/>
    <property type="evidence" value="ECO:0007669"/>
    <property type="project" value="InterPro"/>
</dbReference>
<dbReference type="GO" id="GO:0006351">
    <property type="term" value="P:DNA-templated transcription"/>
    <property type="evidence" value="ECO:0007669"/>
    <property type="project" value="InterPro"/>
</dbReference>
<dbReference type="FunFam" id="1.10.10.10:FF:000362">
    <property type="entry name" value="DNA-directed RNA polymerase III subunit rpc3"/>
    <property type="match status" value="1"/>
</dbReference>
<dbReference type="FunFam" id="1.10.10.10:FF:000696">
    <property type="entry name" value="DNA-directed RNA polymerase III subunit rpc3"/>
    <property type="match status" value="1"/>
</dbReference>
<dbReference type="Gene3D" id="1.10.10.10">
    <property type="entry name" value="Winged helix-like DNA-binding domain superfamily/Winged helix DNA-binding domain"/>
    <property type="match status" value="2"/>
</dbReference>
<dbReference type="InterPro" id="IPR055207">
    <property type="entry name" value="POLR3C_WHD"/>
</dbReference>
<dbReference type="InterPro" id="IPR013197">
    <property type="entry name" value="RNA_pol_III_RPC82-rel_HTH"/>
</dbReference>
<dbReference type="InterPro" id="IPR008806">
    <property type="entry name" value="RNA_pol_III_Rpc82_C"/>
</dbReference>
<dbReference type="InterPro" id="IPR039748">
    <property type="entry name" value="RPC3"/>
</dbReference>
<dbReference type="InterPro" id="IPR036388">
    <property type="entry name" value="WH-like_DNA-bd_sf"/>
</dbReference>
<dbReference type="InterPro" id="IPR036390">
    <property type="entry name" value="WH_DNA-bd_sf"/>
</dbReference>
<dbReference type="PANTHER" id="PTHR12949:SF0">
    <property type="entry name" value="DNA-DIRECTED RNA POLYMERASE III SUBUNIT RPC3"/>
    <property type="match status" value="1"/>
</dbReference>
<dbReference type="PANTHER" id="PTHR12949">
    <property type="entry name" value="RNA POLYMERASE III DNA DIRECTED -RELATED"/>
    <property type="match status" value="1"/>
</dbReference>
<dbReference type="Pfam" id="PF08221">
    <property type="entry name" value="HTH_9"/>
    <property type="match status" value="1"/>
</dbReference>
<dbReference type="Pfam" id="PF22536">
    <property type="entry name" value="POLR3C_WHD"/>
    <property type="match status" value="1"/>
</dbReference>
<dbReference type="Pfam" id="PF05645">
    <property type="entry name" value="RNA_pol_Rpc82"/>
    <property type="match status" value="1"/>
</dbReference>
<dbReference type="SUPFAM" id="SSF46785">
    <property type="entry name" value="Winged helix' DNA-binding domain"/>
    <property type="match status" value="1"/>
</dbReference>
<comment type="function">
    <text evidence="1">DNA-dependent RNA polymerase catalyzes the transcription of DNA into RNA using the four ribonucleoside triphosphates as substrates. Specific core component of RNA polymerase III which synthesizes small RNAs, such as 5S rRNA and tRNAs (By similarity).</text>
</comment>
<comment type="subunit">
    <text evidence="1">Component of the RNA polymerase III (Pol III) complex consisting of 17 subunits.</text>
</comment>
<comment type="subcellular location">
    <subcellularLocation>
        <location evidence="1">Nucleus</location>
    </subcellularLocation>
</comment>
<comment type="similarity">
    <text evidence="3">Belongs to the RNA polymerase beta chain family.</text>
</comment>